<name>PYRH_DEHMC</name>
<organism>
    <name type="scientific">Dehalococcoides mccartyi (strain CBDB1)</name>
    <dbReference type="NCBI Taxonomy" id="255470"/>
    <lineage>
        <taxon>Bacteria</taxon>
        <taxon>Bacillati</taxon>
        <taxon>Chloroflexota</taxon>
        <taxon>Dehalococcoidia</taxon>
        <taxon>Dehalococcoidales</taxon>
        <taxon>Dehalococcoidaceae</taxon>
        <taxon>Dehalococcoides</taxon>
    </lineage>
</organism>
<gene>
    <name evidence="1" type="primary">pyrH</name>
    <name type="ordered locus">cbdbA319</name>
</gene>
<proteinExistence type="inferred from homology"/>
<keyword id="KW-0021">Allosteric enzyme</keyword>
<keyword id="KW-0067">ATP-binding</keyword>
<keyword id="KW-0963">Cytoplasm</keyword>
<keyword id="KW-0418">Kinase</keyword>
<keyword id="KW-0547">Nucleotide-binding</keyword>
<keyword id="KW-0665">Pyrimidine biosynthesis</keyword>
<keyword id="KW-0808">Transferase</keyword>
<sequence length="241" mass="25996">MAEIKYKRILLKLSGEAFKGATGYGIDIPTVRNIAQEIKHICLMGVEVAIVVGGGNIWRGATAAKEGIDRVSADYAGMLATIINAITLQDALEREGIVTRTQSALSVQQVAEPYIRRRAVRHLEKGRVVIFAGGTGNPYMTTDTAAALRAIEIEASVLLMAKNKVDGVYTADPQKHPEATLFQHLTYMEAINKRLQVMDATALSLCLDNKLPIIVFDLQSSESLVSAISGQPIGTLISSES</sequence>
<evidence type="ECO:0000255" key="1">
    <source>
        <dbReference type="HAMAP-Rule" id="MF_01220"/>
    </source>
</evidence>
<feature type="chain" id="PRO_0000323834" description="Uridylate kinase">
    <location>
        <begin position="1"/>
        <end position="241"/>
    </location>
</feature>
<feature type="region of interest" description="Involved in allosteric activation by GTP" evidence="1">
    <location>
        <begin position="20"/>
        <end position="25"/>
    </location>
</feature>
<feature type="binding site" evidence="1">
    <location>
        <begin position="12"/>
        <end position="15"/>
    </location>
    <ligand>
        <name>ATP</name>
        <dbReference type="ChEBI" id="CHEBI:30616"/>
    </ligand>
</feature>
<feature type="binding site" evidence="1">
    <location>
        <position position="54"/>
    </location>
    <ligand>
        <name>UMP</name>
        <dbReference type="ChEBI" id="CHEBI:57865"/>
    </ligand>
</feature>
<feature type="binding site" evidence="1">
    <location>
        <position position="55"/>
    </location>
    <ligand>
        <name>ATP</name>
        <dbReference type="ChEBI" id="CHEBI:30616"/>
    </ligand>
</feature>
<feature type="binding site" evidence="1">
    <location>
        <position position="59"/>
    </location>
    <ligand>
        <name>ATP</name>
        <dbReference type="ChEBI" id="CHEBI:30616"/>
    </ligand>
</feature>
<feature type="binding site" evidence="1">
    <location>
        <position position="74"/>
    </location>
    <ligand>
        <name>UMP</name>
        <dbReference type="ChEBI" id="CHEBI:57865"/>
    </ligand>
</feature>
<feature type="binding site" evidence="1">
    <location>
        <begin position="135"/>
        <end position="142"/>
    </location>
    <ligand>
        <name>UMP</name>
        <dbReference type="ChEBI" id="CHEBI:57865"/>
    </ligand>
</feature>
<feature type="binding site" evidence="1">
    <location>
        <position position="163"/>
    </location>
    <ligand>
        <name>ATP</name>
        <dbReference type="ChEBI" id="CHEBI:30616"/>
    </ligand>
</feature>
<feature type="binding site" evidence="1">
    <location>
        <position position="169"/>
    </location>
    <ligand>
        <name>ATP</name>
        <dbReference type="ChEBI" id="CHEBI:30616"/>
    </ligand>
</feature>
<feature type="binding site" evidence="1">
    <location>
        <position position="172"/>
    </location>
    <ligand>
        <name>ATP</name>
        <dbReference type="ChEBI" id="CHEBI:30616"/>
    </ligand>
</feature>
<accession>Q3ZZC3</accession>
<reference key="1">
    <citation type="journal article" date="2005" name="Nat. Biotechnol.">
        <title>Genome sequence of the chlorinated compound-respiring bacterium Dehalococcoides species strain CBDB1.</title>
        <authorList>
            <person name="Kube M."/>
            <person name="Beck A."/>
            <person name="Zinder S.H."/>
            <person name="Kuhl H."/>
            <person name="Reinhardt R."/>
            <person name="Adrian L."/>
        </authorList>
    </citation>
    <scope>NUCLEOTIDE SEQUENCE [LARGE SCALE GENOMIC DNA]</scope>
    <source>
        <strain>CBDB1</strain>
    </source>
</reference>
<dbReference type="EC" id="2.7.4.22" evidence="1"/>
<dbReference type="EMBL" id="AJ965256">
    <property type="protein sequence ID" value="CAI82543.1"/>
    <property type="molecule type" value="Genomic_DNA"/>
</dbReference>
<dbReference type="RefSeq" id="WP_011308900.1">
    <property type="nucleotide sequence ID" value="NC_007356.1"/>
</dbReference>
<dbReference type="SMR" id="Q3ZZC3"/>
<dbReference type="KEGG" id="deh:cbdbA319"/>
<dbReference type="HOGENOM" id="CLU_033861_0_0_0"/>
<dbReference type="UniPathway" id="UPA00159">
    <property type="reaction ID" value="UER00275"/>
</dbReference>
<dbReference type="Proteomes" id="UP000000433">
    <property type="component" value="Chromosome"/>
</dbReference>
<dbReference type="GO" id="GO:0005737">
    <property type="term" value="C:cytoplasm"/>
    <property type="evidence" value="ECO:0007669"/>
    <property type="project" value="UniProtKB-SubCell"/>
</dbReference>
<dbReference type="GO" id="GO:0005524">
    <property type="term" value="F:ATP binding"/>
    <property type="evidence" value="ECO:0007669"/>
    <property type="project" value="UniProtKB-KW"/>
</dbReference>
<dbReference type="GO" id="GO:0033862">
    <property type="term" value="F:UMP kinase activity"/>
    <property type="evidence" value="ECO:0007669"/>
    <property type="project" value="UniProtKB-EC"/>
</dbReference>
<dbReference type="GO" id="GO:0044210">
    <property type="term" value="P:'de novo' CTP biosynthetic process"/>
    <property type="evidence" value="ECO:0007669"/>
    <property type="project" value="UniProtKB-UniRule"/>
</dbReference>
<dbReference type="GO" id="GO:0006225">
    <property type="term" value="P:UDP biosynthetic process"/>
    <property type="evidence" value="ECO:0007669"/>
    <property type="project" value="TreeGrafter"/>
</dbReference>
<dbReference type="CDD" id="cd04254">
    <property type="entry name" value="AAK_UMPK-PyrH-Ec"/>
    <property type="match status" value="1"/>
</dbReference>
<dbReference type="FunFam" id="3.40.1160.10:FF:000001">
    <property type="entry name" value="Uridylate kinase"/>
    <property type="match status" value="1"/>
</dbReference>
<dbReference type="Gene3D" id="3.40.1160.10">
    <property type="entry name" value="Acetylglutamate kinase-like"/>
    <property type="match status" value="1"/>
</dbReference>
<dbReference type="HAMAP" id="MF_01220_B">
    <property type="entry name" value="PyrH_B"/>
    <property type="match status" value="1"/>
</dbReference>
<dbReference type="InterPro" id="IPR036393">
    <property type="entry name" value="AceGlu_kinase-like_sf"/>
</dbReference>
<dbReference type="InterPro" id="IPR001048">
    <property type="entry name" value="Asp/Glu/Uridylate_kinase"/>
</dbReference>
<dbReference type="InterPro" id="IPR011817">
    <property type="entry name" value="Uridylate_kinase"/>
</dbReference>
<dbReference type="InterPro" id="IPR015963">
    <property type="entry name" value="Uridylate_kinase_bac"/>
</dbReference>
<dbReference type="NCBIfam" id="TIGR02075">
    <property type="entry name" value="pyrH_bact"/>
    <property type="match status" value="1"/>
</dbReference>
<dbReference type="PANTHER" id="PTHR42833">
    <property type="entry name" value="URIDYLATE KINASE"/>
    <property type="match status" value="1"/>
</dbReference>
<dbReference type="PANTHER" id="PTHR42833:SF4">
    <property type="entry name" value="URIDYLATE KINASE PUMPKIN, CHLOROPLASTIC"/>
    <property type="match status" value="1"/>
</dbReference>
<dbReference type="Pfam" id="PF00696">
    <property type="entry name" value="AA_kinase"/>
    <property type="match status" value="1"/>
</dbReference>
<dbReference type="PIRSF" id="PIRSF005650">
    <property type="entry name" value="Uridylate_kin"/>
    <property type="match status" value="1"/>
</dbReference>
<dbReference type="SUPFAM" id="SSF53633">
    <property type="entry name" value="Carbamate kinase-like"/>
    <property type="match status" value="1"/>
</dbReference>
<comment type="function">
    <text evidence="1">Catalyzes the reversible phosphorylation of UMP to UDP.</text>
</comment>
<comment type="catalytic activity">
    <reaction evidence="1">
        <text>UMP + ATP = UDP + ADP</text>
        <dbReference type="Rhea" id="RHEA:24400"/>
        <dbReference type="ChEBI" id="CHEBI:30616"/>
        <dbReference type="ChEBI" id="CHEBI:57865"/>
        <dbReference type="ChEBI" id="CHEBI:58223"/>
        <dbReference type="ChEBI" id="CHEBI:456216"/>
        <dbReference type="EC" id="2.7.4.22"/>
    </reaction>
</comment>
<comment type="activity regulation">
    <text evidence="1">Allosterically activated by GTP. Inhibited by UTP.</text>
</comment>
<comment type="pathway">
    <text evidence="1">Pyrimidine metabolism; CTP biosynthesis via de novo pathway; UDP from UMP (UMPK route): step 1/1.</text>
</comment>
<comment type="subunit">
    <text evidence="1">Homohexamer.</text>
</comment>
<comment type="subcellular location">
    <subcellularLocation>
        <location evidence="1">Cytoplasm</location>
    </subcellularLocation>
</comment>
<comment type="similarity">
    <text evidence="1">Belongs to the UMP kinase family.</text>
</comment>
<protein>
    <recommendedName>
        <fullName evidence="1">Uridylate kinase</fullName>
        <shortName evidence="1">UK</shortName>
        <ecNumber evidence="1">2.7.4.22</ecNumber>
    </recommendedName>
    <alternativeName>
        <fullName evidence="1">Uridine monophosphate kinase</fullName>
        <shortName evidence="1">UMP kinase</shortName>
        <shortName evidence="1">UMPK</shortName>
    </alternativeName>
</protein>